<feature type="chain" id="PRO_1000005534" description="Large ribosomal subunit protein uL10">
    <location>
        <begin position="1"/>
        <end position="196"/>
    </location>
</feature>
<feature type="region of interest" description="Disordered" evidence="2">
    <location>
        <begin position="169"/>
        <end position="196"/>
    </location>
</feature>
<feature type="compositionally biased region" description="Low complexity" evidence="2">
    <location>
        <begin position="172"/>
        <end position="196"/>
    </location>
</feature>
<comment type="function">
    <text evidence="1">Forms part of the ribosomal stalk, playing a central role in the interaction of the ribosome with GTP-bound translation factors.</text>
</comment>
<comment type="subunit">
    <text evidence="1">Part of the ribosomal stalk of the 50S ribosomal subunit. The N-terminus interacts with L11 and the large rRNA to form the base of the stalk. The C-terminus forms an elongated spine to which L12 dimers bind in a sequential fashion forming a multimeric L10(L12)X complex.</text>
</comment>
<comment type="similarity">
    <text evidence="1">Belongs to the universal ribosomal protein uL10 family.</text>
</comment>
<proteinExistence type="inferred from homology"/>
<reference key="1">
    <citation type="submission" date="2006-10" db="EMBL/GenBank/DDBJ databases">
        <authorList>
            <person name="Fleischmann R.D."/>
            <person name="Dodson R.J."/>
            <person name="Haft D.H."/>
            <person name="Merkel J.S."/>
            <person name="Nelson W.C."/>
            <person name="Fraser C.M."/>
        </authorList>
    </citation>
    <scope>NUCLEOTIDE SEQUENCE [LARGE SCALE GENOMIC DNA]</scope>
    <source>
        <strain>104</strain>
    </source>
</reference>
<accession>A0QL54</accession>
<evidence type="ECO:0000255" key="1">
    <source>
        <dbReference type="HAMAP-Rule" id="MF_00362"/>
    </source>
</evidence>
<evidence type="ECO:0000256" key="2">
    <source>
        <dbReference type="SAM" id="MobiDB-lite"/>
    </source>
</evidence>
<evidence type="ECO:0000305" key="3"/>
<keyword id="KW-0687">Ribonucleoprotein</keyword>
<keyword id="KW-0689">Ribosomal protein</keyword>
<keyword id="KW-0694">RNA-binding</keyword>
<keyword id="KW-0699">rRNA-binding</keyword>
<dbReference type="EMBL" id="CP000479">
    <property type="protein sequence ID" value="ABK65923.1"/>
    <property type="molecule type" value="Genomic_DNA"/>
</dbReference>
<dbReference type="RefSeq" id="WP_011726097.1">
    <property type="nucleotide sequence ID" value="NC_008595.1"/>
</dbReference>
<dbReference type="SMR" id="A0QL54"/>
<dbReference type="KEGG" id="mav:MAV_4508"/>
<dbReference type="HOGENOM" id="CLU_092227_1_0_11"/>
<dbReference type="Proteomes" id="UP000001574">
    <property type="component" value="Chromosome"/>
</dbReference>
<dbReference type="GO" id="GO:0015934">
    <property type="term" value="C:large ribosomal subunit"/>
    <property type="evidence" value="ECO:0007669"/>
    <property type="project" value="InterPro"/>
</dbReference>
<dbReference type="GO" id="GO:0070180">
    <property type="term" value="F:large ribosomal subunit rRNA binding"/>
    <property type="evidence" value="ECO:0007669"/>
    <property type="project" value="UniProtKB-UniRule"/>
</dbReference>
<dbReference type="GO" id="GO:0003735">
    <property type="term" value="F:structural constituent of ribosome"/>
    <property type="evidence" value="ECO:0007669"/>
    <property type="project" value="InterPro"/>
</dbReference>
<dbReference type="GO" id="GO:0006412">
    <property type="term" value="P:translation"/>
    <property type="evidence" value="ECO:0007669"/>
    <property type="project" value="UniProtKB-UniRule"/>
</dbReference>
<dbReference type="CDD" id="cd05797">
    <property type="entry name" value="Ribosomal_L10"/>
    <property type="match status" value="1"/>
</dbReference>
<dbReference type="FunFam" id="3.30.70.1730:FF:000003">
    <property type="entry name" value="50S ribosomal protein L10"/>
    <property type="match status" value="1"/>
</dbReference>
<dbReference type="Gene3D" id="3.30.70.1730">
    <property type="match status" value="1"/>
</dbReference>
<dbReference type="Gene3D" id="6.10.250.290">
    <property type="match status" value="1"/>
</dbReference>
<dbReference type="HAMAP" id="MF_00362">
    <property type="entry name" value="Ribosomal_uL10"/>
    <property type="match status" value="1"/>
</dbReference>
<dbReference type="InterPro" id="IPR001790">
    <property type="entry name" value="Ribosomal_uL10"/>
</dbReference>
<dbReference type="InterPro" id="IPR043141">
    <property type="entry name" value="Ribosomal_uL10-like_sf"/>
</dbReference>
<dbReference type="InterPro" id="IPR022973">
    <property type="entry name" value="Ribosomal_uL10_bac"/>
</dbReference>
<dbReference type="InterPro" id="IPR047865">
    <property type="entry name" value="Ribosomal_uL10_bac_type"/>
</dbReference>
<dbReference type="InterPro" id="IPR002363">
    <property type="entry name" value="Ribosomal_uL10_CS_bac"/>
</dbReference>
<dbReference type="NCBIfam" id="NF000955">
    <property type="entry name" value="PRK00099.1-1"/>
    <property type="match status" value="1"/>
</dbReference>
<dbReference type="PANTHER" id="PTHR11560">
    <property type="entry name" value="39S RIBOSOMAL PROTEIN L10, MITOCHONDRIAL"/>
    <property type="match status" value="1"/>
</dbReference>
<dbReference type="Pfam" id="PF00466">
    <property type="entry name" value="Ribosomal_L10"/>
    <property type="match status" value="1"/>
</dbReference>
<dbReference type="SUPFAM" id="SSF160369">
    <property type="entry name" value="Ribosomal protein L10-like"/>
    <property type="match status" value="1"/>
</dbReference>
<dbReference type="PROSITE" id="PS01109">
    <property type="entry name" value="RIBOSOMAL_L10"/>
    <property type="match status" value="1"/>
</dbReference>
<sequence>MARADKATAVADIAEQFKEATATLITEYRGLTVANLAELRRSLSGAATYSVAKNTLVKRAASEAGIEGLDELFAGPTAIAFVTGEPVDAAKAIKTFAKEHKALVIKGGYMDGRALSVAEVERIADLESREVLLAKLAGAMKGNLAKAAGLFNAPASQVARLAAALQEKKAAECPAEAPQPAAETPAEAPEAPADAE</sequence>
<organism>
    <name type="scientific">Mycobacterium avium (strain 104)</name>
    <dbReference type="NCBI Taxonomy" id="243243"/>
    <lineage>
        <taxon>Bacteria</taxon>
        <taxon>Bacillati</taxon>
        <taxon>Actinomycetota</taxon>
        <taxon>Actinomycetes</taxon>
        <taxon>Mycobacteriales</taxon>
        <taxon>Mycobacteriaceae</taxon>
        <taxon>Mycobacterium</taxon>
        <taxon>Mycobacterium avium complex (MAC)</taxon>
    </lineage>
</organism>
<name>RL10_MYCA1</name>
<gene>
    <name evidence="1" type="primary">rplJ</name>
    <name type="ordered locus">MAV_4508</name>
</gene>
<protein>
    <recommendedName>
        <fullName evidence="1">Large ribosomal subunit protein uL10</fullName>
    </recommendedName>
    <alternativeName>
        <fullName evidence="3">50S ribosomal protein L10</fullName>
    </alternativeName>
</protein>